<organism>
    <name type="scientific">Dictyostelium discoideum</name>
    <name type="common">Social amoeba</name>
    <dbReference type="NCBI Taxonomy" id="44689"/>
    <lineage>
        <taxon>Eukaryota</taxon>
        <taxon>Amoebozoa</taxon>
        <taxon>Evosea</taxon>
        <taxon>Eumycetozoa</taxon>
        <taxon>Dictyostelia</taxon>
        <taxon>Dictyosteliales</taxon>
        <taxon>Dictyosteliaceae</taxon>
        <taxon>Dictyostelium</taxon>
    </lineage>
</organism>
<comment type="function">
    <text evidence="2">Binds GTP and exhibits intrinsic GTPase activity.</text>
</comment>
<comment type="catalytic activity">
    <reaction evidence="2">
        <text>GTP + H2O = GDP + phosphate + H(+)</text>
        <dbReference type="Rhea" id="RHEA:19669"/>
        <dbReference type="ChEBI" id="CHEBI:15377"/>
        <dbReference type="ChEBI" id="CHEBI:15378"/>
        <dbReference type="ChEBI" id="CHEBI:37565"/>
        <dbReference type="ChEBI" id="CHEBI:43474"/>
        <dbReference type="ChEBI" id="CHEBI:58189"/>
    </reaction>
    <physiologicalReaction direction="left-to-right" evidence="2">
        <dbReference type="Rhea" id="RHEA:19670"/>
    </physiologicalReaction>
</comment>
<comment type="subcellular location">
    <subcellularLocation>
        <location evidence="3">Cell membrane</location>
        <topology evidence="3">Lipid-anchor</topology>
        <orientation evidence="3">Cytoplasmic side</orientation>
    </subcellularLocation>
</comment>
<comment type="similarity">
    <text evidence="3">Belongs to the small GTPase superfamily. Rheb family.</text>
</comment>
<keyword id="KW-1003">Cell membrane</keyword>
<keyword id="KW-0342">GTP-binding</keyword>
<keyword id="KW-0378">Hydrolase</keyword>
<keyword id="KW-0449">Lipoprotein</keyword>
<keyword id="KW-0460">Magnesium</keyword>
<keyword id="KW-0472">Membrane</keyword>
<keyword id="KW-0479">Metal-binding</keyword>
<keyword id="KW-0488">Methylation</keyword>
<keyword id="KW-0547">Nucleotide-binding</keyword>
<keyword id="KW-0636">Prenylation</keyword>
<keyword id="KW-1185">Reference proteome</keyword>
<evidence type="ECO:0000250" key="1"/>
<evidence type="ECO:0000250" key="2">
    <source>
        <dbReference type="UniProtKB" id="Q15382"/>
    </source>
</evidence>
<evidence type="ECO:0000305" key="3"/>
<feature type="chain" id="PRO_0000327698" description="GTP-binding protein Rheb homolog">
    <location>
        <begin position="1"/>
        <end position="182"/>
    </location>
</feature>
<feature type="propeptide" id="PRO_0000327699" description="Removed in mature form" evidence="1">
    <location>
        <begin position="183"/>
        <end position="185"/>
    </location>
</feature>
<feature type="short sequence motif" description="Effector region">
    <location>
        <begin position="35"/>
        <end position="43"/>
    </location>
</feature>
<feature type="binding site" evidence="2">
    <location>
        <position position="18"/>
    </location>
    <ligand>
        <name>GTP</name>
        <dbReference type="ChEBI" id="CHEBI:37565"/>
    </ligand>
</feature>
<feature type="binding site" evidence="2">
    <location>
        <position position="19"/>
    </location>
    <ligand>
        <name>GTP</name>
        <dbReference type="ChEBI" id="CHEBI:37565"/>
    </ligand>
</feature>
<feature type="binding site" evidence="2">
    <location>
        <position position="20"/>
    </location>
    <ligand>
        <name>GTP</name>
        <dbReference type="ChEBI" id="CHEBI:37565"/>
    </ligand>
</feature>
<feature type="binding site" evidence="2">
    <location>
        <position position="20"/>
    </location>
    <ligand>
        <name>Mg(2+)</name>
        <dbReference type="ChEBI" id="CHEBI:18420"/>
    </ligand>
</feature>
<feature type="binding site" evidence="2">
    <location>
        <position position="21"/>
    </location>
    <ligand>
        <name>GTP</name>
        <dbReference type="ChEBI" id="CHEBI:37565"/>
    </ligand>
</feature>
<feature type="binding site" evidence="2">
    <location>
        <position position="35"/>
    </location>
    <ligand>
        <name>GTP</name>
        <dbReference type="ChEBI" id="CHEBI:37565"/>
    </ligand>
</feature>
<feature type="binding site" evidence="2">
    <location>
        <position position="38"/>
    </location>
    <ligand>
        <name>GTP</name>
        <dbReference type="ChEBI" id="CHEBI:37565"/>
    </ligand>
</feature>
<feature type="binding site" evidence="2">
    <location>
        <position position="38"/>
    </location>
    <ligand>
        <name>Mg(2+)</name>
        <dbReference type="ChEBI" id="CHEBI:18420"/>
    </ligand>
</feature>
<feature type="binding site" evidence="2">
    <location>
        <position position="119"/>
    </location>
    <ligand>
        <name>GTP</name>
        <dbReference type="ChEBI" id="CHEBI:37565"/>
    </ligand>
</feature>
<feature type="binding site" evidence="2">
    <location>
        <position position="122"/>
    </location>
    <ligand>
        <name>GTP</name>
        <dbReference type="ChEBI" id="CHEBI:37565"/>
    </ligand>
</feature>
<feature type="binding site" evidence="2">
    <location>
        <position position="150"/>
    </location>
    <ligand>
        <name>GTP</name>
        <dbReference type="ChEBI" id="CHEBI:37565"/>
    </ligand>
</feature>
<feature type="modified residue" description="Cysteine methyl ester" evidence="1">
    <location>
        <position position="182"/>
    </location>
</feature>
<feature type="lipid moiety-binding region" description="S-farnesyl cysteine" evidence="1">
    <location>
        <position position="182"/>
    </location>
</feature>
<accession>Q550Q4</accession>
<accession>Q7KWW6</accession>
<gene>
    <name type="primary">rheb</name>
    <name type="ORF">DDB_G0277041</name>
</gene>
<sequence>MAPQKHRKICVMGSRAVGKSTITMQFVESHCPDSYHPTIENTYQKIIRHQGQEYSVEIIDTAGQDEYSILQKQYSIGIHGYILVYSVTSVSSLEVIKVLNDKILSSLGAEKIPRVLVGNKSDLDNERNISRDQGIQLANEWECAFVECSGKNNENVEEVFKQILNEVNKGSTGPEPPQKEGCILM</sequence>
<dbReference type="EC" id="3.6.5.-" evidence="2"/>
<dbReference type="EMBL" id="AAFI02000019">
    <property type="protein sequence ID" value="EAL69022.1"/>
    <property type="molecule type" value="Genomic_DNA"/>
</dbReference>
<dbReference type="RefSeq" id="XP_642878.1">
    <property type="nucleotide sequence ID" value="XM_637786.1"/>
</dbReference>
<dbReference type="SMR" id="Q550Q4"/>
<dbReference type="FunCoup" id="Q550Q4">
    <property type="interactions" value="180"/>
</dbReference>
<dbReference type="STRING" id="44689.Q550Q4"/>
<dbReference type="PaxDb" id="44689-DDB0229441"/>
<dbReference type="EnsemblProtists" id="EAL69022">
    <property type="protein sequence ID" value="EAL69022"/>
    <property type="gene ID" value="DDB_G0277041"/>
</dbReference>
<dbReference type="GeneID" id="8620744"/>
<dbReference type="KEGG" id="ddi:DDB_G0277041"/>
<dbReference type="dictyBase" id="DDB_G0277041">
    <property type="gene designation" value="rheb"/>
</dbReference>
<dbReference type="VEuPathDB" id="AmoebaDB:DDB_G0277041"/>
<dbReference type="eggNOG" id="KOG0395">
    <property type="taxonomic scope" value="Eukaryota"/>
</dbReference>
<dbReference type="HOGENOM" id="CLU_041217_9_8_1"/>
<dbReference type="InParanoid" id="Q550Q4"/>
<dbReference type="OMA" id="SARHNEN"/>
<dbReference type="PhylomeDB" id="Q550Q4"/>
<dbReference type="Reactome" id="R-DDI-1632852">
    <property type="pathway name" value="Macroautophagy"/>
</dbReference>
<dbReference type="Reactome" id="R-DDI-165159">
    <property type="pathway name" value="MTOR signalling"/>
</dbReference>
<dbReference type="Reactome" id="R-DDI-166208">
    <property type="pathway name" value="mTORC1-mediated signalling"/>
</dbReference>
<dbReference type="Reactome" id="R-DDI-380972">
    <property type="pathway name" value="Energy dependent regulation of mTOR by LKB1-AMPK"/>
</dbReference>
<dbReference type="Reactome" id="R-DDI-5628897">
    <property type="pathway name" value="TP53 Regulates Metabolic Genes"/>
</dbReference>
<dbReference type="Reactome" id="R-DDI-8943724">
    <property type="pathway name" value="Regulation of PTEN gene transcription"/>
</dbReference>
<dbReference type="Reactome" id="R-DDI-9639288">
    <property type="pathway name" value="Amino acids regulate mTORC1"/>
</dbReference>
<dbReference type="PRO" id="PR:Q550Q4"/>
<dbReference type="Proteomes" id="UP000002195">
    <property type="component" value="Chromosome 2"/>
</dbReference>
<dbReference type="GO" id="GO:0005776">
    <property type="term" value="C:autophagosome"/>
    <property type="evidence" value="ECO:0000314"/>
    <property type="project" value="dictyBase"/>
</dbReference>
<dbReference type="GO" id="GO:0031410">
    <property type="term" value="C:cytoplasmic vesicle"/>
    <property type="evidence" value="ECO:0000314"/>
    <property type="project" value="dictyBase"/>
</dbReference>
<dbReference type="GO" id="GO:0005886">
    <property type="term" value="C:plasma membrane"/>
    <property type="evidence" value="ECO:0000318"/>
    <property type="project" value="GO_Central"/>
</dbReference>
<dbReference type="GO" id="GO:0019003">
    <property type="term" value="F:GDP binding"/>
    <property type="evidence" value="ECO:0000318"/>
    <property type="project" value="GO_Central"/>
</dbReference>
<dbReference type="GO" id="GO:0005525">
    <property type="term" value="F:GTP binding"/>
    <property type="evidence" value="ECO:0000318"/>
    <property type="project" value="GO_Central"/>
</dbReference>
<dbReference type="GO" id="GO:0003924">
    <property type="term" value="F:GTPase activity"/>
    <property type="evidence" value="ECO:0000318"/>
    <property type="project" value="GO_Central"/>
</dbReference>
<dbReference type="GO" id="GO:0046872">
    <property type="term" value="F:metal ion binding"/>
    <property type="evidence" value="ECO:0007669"/>
    <property type="project" value="UniProtKB-KW"/>
</dbReference>
<dbReference type="GO" id="GO:0050765">
    <property type="term" value="P:negative regulation of phagocytosis"/>
    <property type="evidence" value="ECO:0000315"/>
    <property type="project" value="dictyBase"/>
</dbReference>
<dbReference type="GO" id="GO:0032008">
    <property type="term" value="P:positive regulation of TOR signaling"/>
    <property type="evidence" value="ECO:0000315"/>
    <property type="project" value="dictyBase"/>
</dbReference>
<dbReference type="GO" id="GO:0007264">
    <property type="term" value="P:small GTPase-mediated signal transduction"/>
    <property type="evidence" value="ECO:0000318"/>
    <property type="project" value="GO_Central"/>
</dbReference>
<dbReference type="CDD" id="cd04137">
    <property type="entry name" value="RheB"/>
    <property type="match status" value="1"/>
</dbReference>
<dbReference type="FunFam" id="3.40.50.300:FF:000273">
    <property type="entry name" value="GTP-binding protein Rheb homolog"/>
    <property type="match status" value="1"/>
</dbReference>
<dbReference type="Gene3D" id="3.40.50.300">
    <property type="entry name" value="P-loop containing nucleotide triphosphate hydrolases"/>
    <property type="match status" value="1"/>
</dbReference>
<dbReference type="InterPro" id="IPR027417">
    <property type="entry name" value="P-loop_NTPase"/>
</dbReference>
<dbReference type="InterPro" id="IPR005225">
    <property type="entry name" value="Small_GTP-bd"/>
</dbReference>
<dbReference type="InterPro" id="IPR001806">
    <property type="entry name" value="Small_GTPase"/>
</dbReference>
<dbReference type="InterPro" id="IPR020849">
    <property type="entry name" value="Small_GTPase_Ras-type"/>
</dbReference>
<dbReference type="NCBIfam" id="TIGR00231">
    <property type="entry name" value="small_GTP"/>
    <property type="match status" value="1"/>
</dbReference>
<dbReference type="PANTHER" id="PTHR24070">
    <property type="entry name" value="RAS, DI-RAS, AND RHEB FAMILY MEMBERS OF SMALL GTPASE SUPERFAMILY"/>
    <property type="match status" value="1"/>
</dbReference>
<dbReference type="Pfam" id="PF00071">
    <property type="entry name" value="Ras"/>
    <property type="match status" value="1"/>
</dbReference>
<dbReference type="PRINTS" id="PR00449">
    <property type="entry name" value="RASTRNSFRMNG"/>
</dbReference>
<dbReference type="SMART" id="SM00175">
    <property type="entry name" value="RAB"/>
    <property type="match status" value="1"/>
</dbReference>
<dbReference type="SMART" id="SM00173">
    <property type="entry name" value="RAS"/>
    <property type="match status" value="1"/>
</dbReference>
<dbReference type="SMART" id="SM00174">
    <property type="entry name" value="RHO"/>
    <property type="match status" value="1"/>
</dbReference>
<dbReference type="SUPFAM" id="SSF52540">
    <property type="entry name" value="P-loop containing nucleoside triphosphate hydrolases"/>
    <property type="match status" value="1"/>
</dbReference>
<dbReference type="PROSITE" id="PS51421">
    <property type="entry name" value="RAS"/>
    <property type="match status" value="1"/>
</dbReference>
<protein>
    <recommendedName>
        <fullName>GTP-binding protein Rheb homolog</fullName>
        <ecNumber evidence="2">3.6.5.-</ecNumber>
    </recommendedName>
</protein>
<proteinExistence type="inferred from homology"/>
<name>RHEB_DICDI</name>
<reference key="1">
    <citation type="journal article" date="2002" name="Nature">
        <title>Sequence and analysis of chromosome 2 of Dictyostelium discoideum.</title>
        <authorList>
            <person name="Gloeckner G."/>
            <person name="Eichinger L."/>
            <person name="Szafranski K."/>
            <person name="Pachebat J.A."/>
            <person name="Bankier A.T."/>
            <person name="Dear P.H."/>
            <person name="Lehmann R."/>
            <person name="Baumgart C."/>
            <person name="Parra G."/>
            <person name="Abril J.F."/>
            <person name="Guigo R."/>
            <person name="Kumpf K."/>
            <person name="Tunggal B."/>
            <person name="Cox E.C."/>
            <person name="Quail M.A."/>
            <person name="Platzer M."/>
            <person name="Rosenthal A."/>
            <person name="Noegel A.A."/>
        </authorList>
    </citation>
    <scope>NUCLEOTIDE SEQUENCE [LARGE SCALE GENOMIC DNA]</scope>
    <source>
        <strain>AX4</strain>
    </source>
</reference>
<reference key="2">
    <citation type="journal article" date="2005" name="Nature">
        <title>The genome of the social amoeba Dictyostelium discoideum.</title>
        <authorList>
            <person name="Eichinger L."/>
            <person name="Pachebat J.A."/>
            <person name="Gloeckner G."/>
            <person name="Rajandream M.A."/>
            <person name="Sucgang R."/>
            <person name="Berriman M."/>
            <person name="Song J."/>
            <person name="Olsen R."/>
            <person name="Szafranski K."/>
            <person name="Xu Q."/>
            <person name="Tunggal B."/>
            <person name="Kummerfeld S."/>
            <person name="Madera M."/>
            <person name="Konfortov B.A."/>
            <person name="Rivero F."/>
            <person name="Bankier A.T."/>
            <person name="Lehmann R."/>
            <person name="Hamlin N."/>
            <person name="Davies R."/>
            <person name="Gaudet P."/>
            <person name="Fey P."/>
            <person name="Pilcher K."/>
            <person name="Chen G."/>
            <person name="Saunders D."/>
            <person name="Sodergren E.J."/>
            <person name="Davis P."/>
            <person name="Kerhornou A."/>
            <person name="Nie X."/>
            <person name="Hall N."/>
            <person name="Anjard C."/>
            <person name="Hemphill L."/>
            <person name="Bason N."/>
            <person name="Farbrother P."/>
            <person name="Desany B."/>
            <person name="Just E."/>
            <person name="Morio T."/>
            <person name="Rost R."/>
            <person name="Churcher C.M."/>
            <person name="Cooper J."/>
            <person name="Haydock S."/>
            <person name="van Driessche N."/>
            <person name="Cronin A."/>
            <person name="Goodhead I."/>
            <person name="Muzny D.M."/>
            <person name="Mourier T."/>
            <person name="Pain A."/>
            <person name="Lu M."/>
            <person name="Harper D."/>
            <person name="Lindsay R."/>
            <person name="Hauser H."/>
            <person name="James K.D."/>
            <person name="Quiles M."/>
            <person name="Madan Babu M."/>
            <person name="Saito T."/>
            <person name="Buchrieser C."/>
            <person name="Wardroper A."/>
            <person name="Felder M."/>
            <person name="Thangavelu M."/>
            <person name="Johnson D."/>
            <person name="Knights A."/>
            <person name="Loulseged H."/>
            <person name="Mungall K.L."/>
            <person name="Oliver K."/>
            <person name="Price C."/>
            <person name="Quail M.A."/>
            <person name="Urushihara H."/>
            <person name="Hernandez J."/>
            <person name="Rabbinowitsch E."/>
            <person name="Steffen D."/>
            <person name="Sanders M."/>
            <person name="Ma J."/>
            <person name="Kohara Y."/>
            <person name="Sharp S."/>
            <person name="Simmonds M.N."/>
            <person name="Spiegler S."/>
            <person name="Tivey A."/>
            <person name="Sugano S."/>
            <person name="White B."/>
            <person name="Walker D."/>
            <person name="Woodward J.R."/>
            <person name="Winckler T."/>
            <person name="Tanaka Y."/>
            <person name="Shaulsky G."/>
            <person name="Schleicher M."/>
            <person name="Weinstock G.M."/>
            <person name="Rosenthal A."/>
            <person name="Cox E.C."/>
            <person name="Chisholm R.L."/>
            <person name="Gibbs R.A."/>
            <person name="Loomis W.F."/>
            <person name="Platzer M."/>
            <person name="Kay R.R."/>
            <person name="Williams J.G."/>
            <person name="Dear P.H."/>
            <person name="Noegel A.A."/>
            <person name="Barrell B.G."/>
            <person name="Kuspa A."/>
        </authorList>
    </citation>
    <scope>NUCLEOTIDE SEQUENCE [LARGE SCALE GENOMIC DNA]</scope>
    <source>
        <strain>AX4</strain>
    </source>
</reference>